<sequence>MTFRDILSVTFEGPRSSSSTGGSGAGGGAGTVGPEGGAVGGVPGATGGGAVVGTGSGEDNQSSTGEPGAAASGEVNGSAAVGGLVVSAQGVGVGVFLAAFILTAVAGNLLVILSVACNRHLQTVTNYFIVNLAVADLLLSAAVLPFSATMEVLGFWAFGRTFCDVWAAVDVLCCTASILSLCTISVDRYVGVRHSLKYPAIMTERKAAAILALLWAVALVVSVGPLLGWKEPVPPDERFCGITEEVGYAIFSSVCSFYLPMAVIVVMYCRVYVVARSTTRSLEAGIKREPGKASEVVLRIHCRGAATSAKGYPGTQSSKGHTLRSSLSVRLLKFSREKKAAKTLAIVVGVFVLCWFPFFFVLPLGSLFPQLKPSEGVFKVIFWLGYFNSCVNPLIYPCSSREFKRAFLRLLRCQCRRRRRRLWAVYGHHWRASTGDARSDCAPSPRIAPPGAPLALTAHPGAGSADTPETQDSVSSSRKPASALREWRLLGPLQRPTTQLRAKVSSLSHKIRSGARRAETACALRSEVEAVSLNVPQDGAEAVICQAYEPGDYSNLRETDI</sequence>
<organism>
    <name type="scientific">Rattus norvegicus</name>
    <name type="common">Rat</name>
    <dbReference type="NCBI Taxonomy" id="10116"/>
    <lineage>
        <taxon>Eukaryota</taxon>
        <taxon>Metazoa</taxon>
        <taxon>Chordata</taxon>
        <taxon>Craniata</taxon>
        <taxon>Vertebrata</taxon>
        <taxon>Euteleostomi</taxon>
        <taxon>Mammalia</taxon>
        <taxon>Eutheria</taxon>
        <taxon>Euarchontoglires</taxon>
        <taxon>Glires</taxon>
        <taxon>Rodentia</taxon>
        <taxon>Myomorpha</taxon>
        <taxon>Muroidea</taxon>
        <taxon>Muridae</taxon>
        <taxon>Murinae</taxon>
        <taxon>Rattus</taxon>
    </lineage>
</organism>
<name>ADA1D_RAT</name>
<dbReference type="EMBL" id="M60654">
    <property type="protein sequence ID" value="AAA63477.1"/>
    <property type="status" value="ALT_FRAME"/>
    <property type="molecule type" value="mRNA"/>
</dbReference>
<dbReference type="EMBL" id="L31771">
    <property type="protein sequence ID" value="AAB59704.1"/>
    <property type="molecule type" value="mRNA"/>
</dbReference>
<dbReference type="EMBL" id="AF071014">
    <property type="protein sequence ID" value="AAC25396.1"/>
    <property type="molecule type" value="Genomic_DNA"/>
</dbReference>
<dbReference type="PIR" id="A38731">
    <property type="entry name" value="A38731"/>
</dbReference>
<dbReference type="RefSeq" id="NP_077809.1">
    <property type="nucleotide sequence ID" value="NM_024483.1"/>
</dbReference>
<dbReference type="SMR" id="P23944"/>
<dbReference type="CORUM" id="P23944"/>
<dbReference type="FunCoup" id="P23944">
    <property type="interactions" value="77"/>
</dbReference>
<dbReference type="STRING" id="10116.ENSRNOP00000028877"/>
<dbReference type="BindingDB" id="P23944"/>
<dbReference type="ChEMBL" id="CHEMBL326"/>
<dbReference type="DrugCentral" id="P23944"/>
<dbReference type="GuidetoPHARMACOLOGY" id="24"/>
<dbReference type="GlyCosmos" id="P23944">
    <property type="glycosylation" value="2 sites, No reported glycans"/>
</dbReference>
<dbReference type="GlyGen" id="P23944">
    <property type="glycosylation" value="2 sites"/>
</dbReference>
<dbReference type="PhosphoSitePlus" id="P23944"/>
<dbReference type="PaxDb" id="10116-ENSRNOP00000028877"/>
<dbReference type="GeneID" id="29413"/>
<dbReference type="KEGG" id="rno:29413"/>
<dbReference type="UCSC" id="RGD:62064">
    <property type="organism name" value="rat"/>
</dbReference>
<dbReference type="AGR" id="RGD:62064"/>
<dbReference type="CTD" id="146"/>
<dbReference type="RGD" id="62064">
    <property type="gene designation" value="Adra1d"/>
</dbReference>
<dbReference type="eggNOG" id="KOG3656">
    <property type="taxonomic scope" value="Eukaryota"/>
</dbReference>
<dbReference type="InParanoid" id="P23944"/>
<dbReference type="PhylomeDB" id="P23944"/>
<dbReference type="Reactome" id="R-RNO-390696">
    <property type="pathway name" value="Adrenoceptors"/>
</dbReference>
<dbReference type="Reactome" id="R-RNO-416476">
    <property type="pathway name" value="G alpha (q) signalling events"/>
</dbReference>
<dbReference type="Reactome" id="R-RNO-416482">
    <property type="pathway name" value="G alpha (12/13) signalling events"/>
</dbReference>
<dbReference type="PRO" id="PR:P23944"/>
<dbReference type="Proteomes" id="UP000002494">
    <property type="component" value="Unplaced"/>
</dbReference>
<dbReference type="GO" id="GO:0005886">
    <property type="term" value="C:plasma membrane"/>
    <property type="evidence" value="ECO:0000318"/>
    <property type="project" value="GO_Central"/>
</dbReference>
<dbReference type="GO" id="GO:0004937">
    <property type="term" value="F:alpha1-adrenergic receptor activity"/>
    <property type="evidence" value="ECO:0000314"/>
    <property type="project" value="RGD"/>
</dbReference>
<dbReference type="GO" id="GO:0042802">
    <property type="term" value="F:identical protein binding"/>
    <property type="evidence" value="ECO:0000266"/>
    <property type="project" value="RGD"/>
</dbReference>
<dbReference type="GO" id="GO:0071880">
    <property type="term" value="P:adenylate cyclase-activating adrenergic receptor signaling pathway"/>
    <property type="evidence" value="ECO:0000318"/>
    <property type="project" value="GO_Central"/>
</dbReference>
<dbReference type="GO" id="GO:0007267">
    <property type="term" value="P:cell-cell signaling"/>
    <property type="evidence" value="ECO:0000318"/>
    <property type="project" value="GO_Central"/>
</dbReference>
<dbReference type="GO" id="GO:0001986">
    <property type="term" value="P:negative regulation of the force of heart contraction involved in baroreceptor response to increased systemic arterial blood pressure"/>
    <property type="evidence" value="ECO:0000266"/>
    <property type="project" value="RGD"/>
</dbReference>
<dbReference type="GO" id="GO:0150099">
    <property type="term" value="P:neuron-glial cell signaling"/>
    <property type="evidence" value="ECO:0000266"/>
    <property type="project" value="RGD"/>
</dbReference>
<dbReference type="GO" id="GO:0001994">
    <property type="term" value="P:norepinephrine-epinephrine vasoconstriction involved in regulation of systemic arterial blood pressure"/>
    <property type="evidence" value="ECO:0000266"/>
    <property type="project" value="RGD"/>
</dbReference>
<dbReference type="GO" id="GO:0007200">
    <property type="term" value="P:phospholipase C-activating G protein-coupled receptor signaling pathway"/>
    <property type="evidence" value="ECO:0000318"/>
    <property type="project" value="GO_Central"/>
</dbReference>
<dbReference type="GO" id="GO:0007204">
    <property type="term" value="P:positive regulation of cytosolic calcium ion concentration"/>
    <property type="evidence" value="ECO:0000318"/>
    <property type="project" value="GO_Central"/>
</dbReference>
<dbReference type="GO" id="GO:0043410">
    <property type="term" value="P:positive regulation of MAPK cascade"/>
    <property type="evidence" value="ECO:0000318"/>
    <property type="project" value="GO_Central"/>
</dbReference>
<dbReference type="GO" id="GO:0045907">
    <property type="term" value="P:positive regulation of vasoconstriction"/>
    <property type="evidence" value="ECO:0000315"/>
    <property type="project" value="RGD"/>
</dbReference>
<dbReference type="GO" id="GO:0008217">
    <property type="term" value="P:regulation of blood pressure"/>
    <property type="evidence" value="ECO:0000266"/>
    <property type="project" value="RGD"/>
</dbReference>
<dbReference type="FunFam" id="1.20.1070.10:FF:000208">
    <property type="entry name" value="Alpha-1D adrenergic receptor"/>
    <property type="match status" value="1"/>
</dbReference>
<dbReference type="Gene3D" id="1.20.1070.10">
    <property type="entry name" value="Rhodopsin 7-helix transmembrane proteins"/>
    <property type="match status" value="1"/>
</dbReference>
<dbReference type="InterPro" id="IPR002233">
    <property type="entry name" value="ADR_fam"/>
</dbReference>
<dbReference type="InterPro" id="IPR000363">
    <property type="entry name" value="ADRA1D_rcpt"/>
</dbReference>
<dbReference type="InterPro" id="IPR000276">
    <property type="entry name" value="GPCR_Rhodpsn"/>
</dbReference>
<dbReference type="InterPro" id="IPR017452">
    <property type="entry name" value="GPCR_Rhodpsn_7TM"/>
</dbReference>
<dbReference type="PANTHER" id="PTHR24248">
    <property type="entry name" value="ADRENERGIC RECEPTOR-RELATED G-PROTEIN COUPLED RECEPTOR"/>
    <property type="match status" value="1"/>
</dbReference>
<dbReference type="PANTHER" id="PTHR24248:SF14">
    <property type="entry name" value="ALPHA-1D ADRENERGIC RECEPTOR"/>
    <property type="match status" value="1"/>
</dbReference>
<dbReference type="Pfam" id="PF00001">
    <property type="entry name" value="7tm_1"/>
    <property type="match status" value="1"/>
</dbReference>
<dbReference type="PRINTS" id="PR01103">
    <property type="entry name" value="ADRENERGICR"/>
</dbReference>
<dbReference type="PRINTS" id="PR00240">
    <property type="entry name" value="ADRENRGCA1DR"/>
</dbReference>
<dbReference type="PRINTS" id="PR00237">
    <property type="entry name" value="GPCRRHODOPSN"/>
</dbReference>
<dbReference type="SMART" id="SM01381">
    <property type="entry name" value="7TM_GPCR_Srsx"/>
    <property type="match status" value="1"/>
</dbReference>
<dbReference type="SUPFAM" id="SSF81321">
    <property type="entry name" value="Family A G protein-coupled receptor-like"/>
    <property type="match status" value="1"/>
</dbReference>
<dbReference type="PROSITE" id="PS00237">
    <property type="entry name" value="G_PROTEIN_RECEP_F1_1"/>
    <property type="match status" value="1"/>
</dbReference>
<dbReference type="PROSITE" id="PS50262">
    <property type="entry name" value="G_PROTEIN_RECEP_F1_2"/>
    <property type="match status" value="1"/>
</dbReference>
<accession>P23944</accession>
<accession>Q71UM4</accession>
<comment type="function">
    <text>This alpha-adrenergic receptor mediates its effect through the influx of extracellular calcium.</text>
</comment>
<comment type="subunit">
    <text evidence="2">Interacts with FLNA (via filamin repeat 21); increases PKA-mediated phosphorylation of FLNA.</text>
</comment>
<comment type="subcellular location">
    <subcellularLocation>
        <location>Cell membrane</location>
        <topology>Multi-pass membrane protein</topology>
    </subcellularLocation>
</comment>
<comment type="tissue specificity">
    <text>Vas deferens, hippocampus, cerebral cortex, aorta, brain stem, heart and spleen.</text>
</comment>
<comment type="PTM">
    <text evidence="3">Palmitoylated. Palmitoylation by ZDHHC21 may increase the expression of the receptor and regulate downstream signaling.</text>
</comment>
<comment type="similarity">
    <text evidence="5">Belongs to the G-protein coupled receptor 1 family. Adrenergic receptor subfamily. ADRA1D sub-subfamily.</text>
</comment>
<comment type="sequence caution" evidence="7">
    <conflict type="frameshift">
        <sequence resource="EMBL-CDS" id="AAA63477"/>
    </conflict>
</comment>
<protein>
    <recommendedName>
        <fullName>Alpha-1D adrenergic receptor</fullName>
    </recommendedName>
    <alternativeName>
        <fullName>Alpha-1A adrenergic receptor</fullName>
    </alternativeName>
    <alternativeName>
        <fullName>Alpha-1D adrenoreceptor</fullName>
        <shortName>Alpha-1D adrenoceptor</shortName>
    </alternativeName>
    <alternativeName>
        <fullName>RA42</fullName>
    </alternativeName>
</protein>
<keyword id="KW-1003">Cell membrane</keyword>
<keyword id="KW-0297">G-protein coupled receptor</keyword>
<keyword id="KW-0325">Glycoprotein</keyword>
<keyword id="KW-0449">Lipoprotein</keyword>
<keyword id="KW-0472">Membrane</keyword>
<keyword id="KW-0564">Palmitate</keyword>
<keyword id="KW-0675">Receptor</keyword>
<keyword id="KW-1185">Reference proteome</keyword>
<keyword id="KW-0807">Transducer</keyword>
<keyword id="KW-0812">Transmembrane</keyword>
<keyword id="KW-1133">Transmembrane helix</keyword>
<feature type="chain" id="PRO_0000069077" description="Alpha-1D adrenergic receptor">
    <location>
        <begin position="1"/>
        <end position="561"/>
    </location>
</feature>
<feature type="topological domain" description="Extracellular" evidence="1">
    <location>
        <begin position="1"/>
        <end position="90"/>
    </location>
</feature>
<feature type="transmembrane region" description="Helical; Name=1" evidence="1">
    <location>
        <begin position="91"/>
        <end position="115"/>
    </location>
</feature>
<feature type="topological domain" description="Cytoplasmic" evidence="1">
    <location>
        <begin position="116"/>
        <end position="127"/>
    </location>
</feature>
<feature type="transmembrane region" description="Helical; Name=2" evidence="1">
    <location>
        <begin position="128"/>
        <end position="153"/>
    </location>
</feature>
<feature type="topological domain" description="Extracellular" evidence="1">
    <location>
        <begin position="154"/>
        <end position="163"/>
    </location>
</feature>
<feature type="transmembrane region" description="Helical; Name=3" evidence="1">
    <location>
        <begin position="164"/>
        <end position="186"/>
    </location>
</feature>
<feature type="topological domain" description="Cytoplasmic" evidence="1">
    <location>
        <begin position="187"/>
        <end position="207"/>
    </location>
</feature>
<feature type="transmembrane region" description="Helical; Name=4" evidence="1">
    <location>
        <begin position="208"/>
        <end position="232"/>
    </location>
</feature>
<feature type="topological domain" description="Extracellular" evidence="1">
    <location>
        <begin position="233"/>
        <end position="245"/>
    </location>
</feature>
<feature type="transmembrane region" description="Helical; Name=5" evidence="1">
    <location>
        <begin position="246"/>
        <end position="269"/>
    </location>
</feature>
<feature type="topological domain" description="Cytoplasmic" evidence="1">
    <location>
        <begin position="270"/>
        <end position="342"/>
    </location>
</feature>
<feature type="transmembrane region" description="Helical; Name=6" evidence="1">
    <location>
        <begin position="343"/>
        <end position="367"/>
    </location>
</feature>
<feature type="topological domain" description="Extracellular" evidence="1">
    <location>
        <begin position="368"/>
        <end position="374"/>
    </location>
</feature>
<feature type="transmembrane region" description="Helical; Name=7" evidence="1">
    <location>
        <begin position="375"/>
        <end position="399"/>
    </location>
</feature>
<feature type="topological domain" description="Cytoplasmic" evidence="1">
    <location>
        <begin position="400"/>
        <end position="561"/>
    </location>
</feature>
<feature type="region of interest" description="Disordered" evidence="6">
    <location>
        <begin position="10"/>
        <end position="71"/>
    </location>
</feature>
<feature type="region of interest" description="Disordered" evidence="6">
    <location>
        <begin position="452"/>
        <end position="481"/>
    </location>
</feature>
<feature type="compositionally biased region" description="Gly residues" evidence="6">
    <location>
        <begin position="21"/>
        <end position="56"/>
    </location>
</feature>
<feature type="compositionally biased region" description="Polar residues" evidence="6">
    <location>
        <begin position="467"/>
        <end position="479"/>
    </location>
</feature>
<feature type="lipid moiety-binding region" description="S-palmitoyl cysteine" evidence="4">
    <location>
        <position position="413"/>
    </location>
</feature>
<feature type="glycosylation site" description="N-linked (GlcNAc...) asparagine" evidence="4">
    <location>
        <position position="60"/>
    </location>
</feature>
<feature type="glycosylation site" description="N-linked (GlcNAc...) asparagine" evidence="4">
    <location>
        <position position="76"/>
    </location>
</feature>
<proteinExistence type="evidence at transcript level"/>
<evidence type="ECO:0000250" key="1"/>
<evidence type="ECO:0000250" key="2">
    <source>
        <dbReference type="UniProtKB" id="P25100"/>
    </source>
</evidence>
<evidence type="ECO:0000250" key="3">
    <source>
        <dbReference type="UniProtKB" id="P97714"/>
    </source>
</evidence>
<evidence type="ECO:0000255" key="4"/>
<evidence type="ECO:0000255" key="5">
    <source>
        <dbReference type="PROSITE-ProRule" id="PRU00521"/>
    </source>
</evidence>
<evidence type="ECO:0000256" key="6">
    <source>
        <dbReference type="SAM" id="MobiDB-lite"/>
    </source>
</evidence>
<evidence type="ECO:0000305" key="7"/>
<reference key="1">
    <citation type="journal article" date="1991" name="J. Biol. Chem.">
        <title>Molecular cloning and expression of the cDNA for the alpha 1A-adrenergic receptor. The gene for which is located on human chromosome 5.</title>
        <authorList>
            <person name="Lomasney J.W."/>
            <person name="Cotecchia S."/>
            <person name="Lorenz W."/>
            <person name="Leung W.-Y."/>
            <person name="Schwinn D.A."/>
            <person name="Yang-Feng T.L."/>
            <person name="Brownstein M."/>
            <person name="Lefkowitz R.J."/>
            <person name="Caron M.G."/>
        </authorList>
    </citation>
    <scope>NUCLEOTIDE SEQUENCE</scope>
    <source>
        <strain>Sprague-Dawley</strain>
        <tissue>Brain cortex</tissue>
    </source>
</reference>
<reference key="2">
    <citation type="journal article" date="1991" name="Mol. Pharmacol.">
        <title>Solution-phase library screening for the identification of rare clones: isolation of an alpha 1D-adrenergic receptor cDNA.</title>
        <authorList>
            <person name="Perez D.M."/>
            <person name="Piascik M.T."/>
            <person name="Graham R.M."/>
        </authorList>
    </citation>
    <scope>NUCLEOTIDE SEQUENCE</scope>
    <source>
        <tissue>Hippocampus</tissue>
    </source>
</reference>
<reference key="3">
    <citation type="journal article" date="1995" name="J. Pharmacol. Exp. Ther.">
        <title>Cloning and pharmacological characterization of human alpha-1 adrenergic receptors: sequence corrections and direct comparison with other species homologues.</title>
        <authorList>
            <person name="Schwinn D.A."/>
            <person name="Johnston G.I."/>
            <person name="Page S.O."/>
            <person name="Mosley M.J."/>
            <person name="Wilson K.H."/>
            <person name="Worman N.P."/>
            <person name="Campbell S."/>
            <person name="Fidock M.D."/>
            <person name="Furness L.M."/>
            <person name="Parry-Smith D.J."/>
            <person name="Peter B."/>
            <person name="Bailey D.S."/>
        </authorList>
    </citation>
    <scope>NUCLEOTIDE SEQUENCE [MRNA]</scope>
</reference>
<reference key="4">
    <citation type="journal article" date="1999" name="Mol. Pharmacol.">
        <title>Platelet-derived growth factor-BB inhibits rat alpha1D-adrenergic receptor gene expression in vascular smooth muscle cells by inducing AP-2-like protein binding to alpha1D proximal promoter region.</title>
        <authorList>
            <person name="Xin X."/>
            <person name="Yang N."/>
            <person name="Faber J.E."/>
        </authorList>
    </citation>
    <scope>NUCLEOTIDE SEQUENCE [GENOMIC DNA] OF 1-62</scope>
</reference>
<gene>
    <name type="primary">Adra1d</name>
    <name type="synonym">Adra1a</name>
</gene>